<accession>A7H9F5</accession>
<name>RBFA_ANADF</name>
<proteinExistence type="inferred from homology"/>
<reference key="1">
    <citation type="journal article" date="2015" name="Genome Announc.">
        <title>Complete genome sequence of Anaeromyxobacter sp. Fw109-5, an anaerobic, metal-reducing bacterium isolated from a contaminated subsurface environment.</title>
        <authorList>
            <person name="Hwang C."/>
            <person name="Copeland A."/>
            <person name="Lucas S."/>
            <person name="Lapidus A."/>
            <person name="Barry K."/>
            <person name="Glavina Del Rio T."/>
            <person name="Dalin E."/>
            <person name="Tice H."/>
            <person name="Pitluck S."/>
            <person name="Sims D."/>
            <person name="Brettin T."/>
            <person name="Bruce D.C."/>
            <person name="Detter J.C."/>
            <person name="Han C.S."/>
            <person name="Schmutz J."/>
            <person name="Larimer F.W."/>
            <person name="Land M.L."/>
            <person name="Hauser L.J."/>
            <person name="Kyrpides N."/>
            <person name="Lykidis A."/>
            <person name="Richardson P."/>
            <person name="Belieav A."/>
            <person name="Sanford R.A."/>
            <person name="Loeffler F.E."/>
            <person name="Fields M.W."/>
        </authorList>
    </citation>
    <scope>NUCLEOTIDE SEQUENCE [LARGE SCALE GENOMIC DNA]</scope>
    <source>
        <strain>Fw109-5</strain>
    </source>
</reference>
<evidence type="ECO:0000255" key="1">
    <source>
        <dbReference type="HAMAP-Rule" id="MF_00003"/>
    </source>
</evidence>
<keyword id="KW-0963">Cytoplasm</keyword>
<keyword id="KW-1185">Reference proteome</keyword>
<keyword id="KW-0690">Ribosome biogenesis</keyword>
<dbReference type="EMBL" id="CP000769">
    <property type="protein sequence ID" value="ABS25351.1"/>
    <property type="molecule type" value="Genomic_DNA"/>
</dbReference>
<dbReference type="RefSeq" id="WP_011985457.1">
    <property type="nucleotide sequence ID" value="NC_009675.1"/>
</dbReference>
<dbReference type="SMR" id="A7H9F5"/>
<dbReference type="STRING" id="404589.Anae109_1143"/>
<dbReference type="KEGG" id="afw:Anae109_1143"/>
<dbReference type="eggNOG" id="COG0858">
    <property type="taxonomic scope" value="Bacteria"/>
</dbReference>
<dbReference type="HOGENOM" id="CLU_089475_3_0_7"/>
<dbReference type="OrthoDB" id="307788at2"/>
<dbReference type="Proteomes" id="UP000006382">
    <property type="component" value="Chromosome"/>
</dbReference>
<dbReference type="GO" id="GO:0005829">
    <property type="term" value="C:cytosol"/>
    <property type="evidence" value="ECO:0007669"/>
    <property type="project" value="TreeGrafter"/>
</dbReference>
<dbReference type="GO" id="GO:0043024">
    <property type="term" value="F:ribosomal small subunit binding"/>
    <property type="evidence" value="ECO:0007669"/>
    <property type="project" value="TreeGrafter"/>
</dbReference>
<dbReference type="GO" id="GO:0030490">
    <property type="term" value="P:maturation of SSU-rRNA"/>
    <property type="evidence" value="ECO:0007669"/>
    <property type="project" value="UniProtKB-UniRule"/>
</dbReference>
<dbReference type="Gene3D" id="3.30.300.20">
    <property type="match status" value="1"/>
</dbReference>
<dbReference type="HAMAP" id="MF_00003">
    <property type="entry name" value="RbfA"/>
    <property type="match status" value="1"/>
</dbReference>
<dbReference type="InterPro" id="IPR015946">
    <property type="entry name" value="KH_dom-like_a/b"/>
</dbReference>
<dbReference type="InterPro" id="IPR000238">
    <property type="entry name" value="RbfA"/>
</dbReference>
<dbReference type="InterPro" id="IPR023799">
    <property type="entry name" value="RbfA_dom_sf"/>
</dbReference>
<dbReference type="InterPro" id="IPR020053">
    <property type="entry name" value="Ribosome-bd_factorA_CS"/>
</dbReference>
<dbReference type="NCBIfam" id="TIGR00082">
    <property type="entry name" value="rbfA"/>
    <property type="match status" value="1"/>
</dbReference>
<dbReference type="PANTHER" id="PTHR33515">
    <property type="entry name" value="RIBOSOME-BINDING FACTOR A, CHLOROPLASTIC-RELATED"/>
    <property type="match status" value="1"/>
</dbReference>
<dbReference type="PANTHER" id="PTHR33515:SF1">
    <property type="entry name" value="RIBOSOME-BINDING FACTOR A, CHLOROPLASTIC-RELATED"/>
    <property type="match status" value="1"/>
</dbReference>
<dbReference type="Pfam" id="PF02033">
    <property type="entry name" value="RBFA"/>
    <property type="match status" value="1"/>
</dbReference>
<dbReference type="SUPFAM" id="SSF89919">
    <property type="entry name" value="Ribosome-binding factor A, RbfA"/>
    <property type="match status" value="1"/>
</dbReference>
<dbReference type="PROSITE" id="PS01319">
    <property type="entry name" value="RBFA"/>
    <property type="match status" value="1"/>
</dbReference>
<feature type="chain" id="PRO_1000000066" description="Ribosome-binding factor A">
    <location>
        <begin position="1"/>
        <end position="122"/>
    </location>
</feature>
<protein>
    <recommendedName>
        <fullName evidence="1">Ribosome-binding factor A</fullName>
    </recommendedName>
</protein>
<gene>
    <name evidence="1" type="primary">rbfA</name>
    <name type="ordered locus">Anae109_1143</name>
</gene>
<comment type="function">
    <text evidence="1">One of several proteins that assist in the late maturation steps of the functional core of the 30S ribosomal subunit. Associates with free 30S ribosomal subunits (but not with 30S subunits that are part of 70S ribosomes or polysomes). Required for efficient processing of 16S rRNA. May interact with the 5'-terminal helix region of 16S rRNA.</text>
</comment>
<comment type="subunit">
    <text evidence="1">Monomer. Binds 30S ribosomal subunits, but not 50S ribosomal subunits or 70S ribosomes.</text>
</comment>
<comment type="subcellular location">
    <subcellularLocation>
        <location evidence="1">Cytoplasm</location>
    </subcellularLocation>
</comment>
<comment type="similarity">
    <text evidence="1">Belongs to the RbfA family.</text>
</comment>
<organism>
    <name type="scientific">Anaeromyxobacter sp. (strain Fw109-5)</name>
    <dbReference type="NCBI Taxonomy" id="404589"/>
    <lineage>
        <taxon>Bacteria</taxon>
        <taxon>Pseudomonadati</taxon>
        <taxon>Myxococcota</taxon>
        <taxon>Myxococcia</taxon>
        <taxon>Myxococcales</taxon>
        <taxon>Cystobacterineae</taxon>
        <taxon>Anaeromyxobacteraceae</taxon>
        <taxon>Anaeromyxobacter</taxon>
    </lineage>
</organism>
<sequence>MSTHSRPARVAEEFRHGLADVIARGLKDPRVTGFITVTGAKMSPDLKEVTAYVSIHAEDAERERTLEGLKAASTFLQREVARSLRLRHTPHLRFVYDESVARGDRIERLLKEAREKDSHGES</sequence>